<dbReference type="EMBL" id="AF068057">
    <property type="protein sequence ID" value="AAC23838.1"/>
    <property type="molecule type" value="mRNA"/>
</dbReference>
<dbReference type="EMBL" id="DQ852342">
    <property type="protein sequence ID" value="ABH10827.1"/>
    <property type="molecule type" value="mRNA"/>
</dbReference>
<dbReference type="RefSeq" id="NP_001156652.1">
    <property type="nucleotide sequence ID" value="NM_001163180.1"/>
</dbReference>
<dbReference type="SMR" id="O77620"/>
<dbReference type="FunCoup" id="O77620">
    <property type="interactions" value="174"/>
</dbReference>
<dbReference type="STRING" id="9986.ENSOCUP00000008701"/>
<dbReference type="GlyCosmos" id="O77620">
    <property type="glycosylation" value="2 sites, No reported glycans"/>
</dbReference>
<dbReference type="PaxDb" id="9986-ENSOCUP00000008701"/>
<dbReference type="Ensembl" id="ENSOCUT00000010098.2">
    <property type="protein sequence ID" value="ENSOCUP00000008701.2"/>
    <property type="gene ID" value="ENSOCUG00000010100.4"/>
</dbReference>
<dbReference type="GeneID" id="100302458"/>
<dbReference type="KEGG" id="ocu:100302458"/>
<dbReference type="CTD" id="3558"/>
<dbReference type="eggNOG" id="ENOG502RVR5">
    <property type="taxonomic scope" value="Eukaryota"/>
</dbReference>
<dbReference type="GeneTree" id="ENSGT00390000003555"/>
<dbReference type="HOGENOM" id="CLU_124210_0_0_1"/>
<dbReference type="InParanoid" id="O77620"/>
<dbReference type="OMA" id="NGVNNYE"/>
<dbReference type="OrthoDB" id="9450228at2759"/>
<dbReference type="TreeFam" id="TF338200"/>
<dbReference type="Proteomes" id="UP000001811">
    <property type="component" value="Chromosome 15"/>
</dbReference>
<dbReference type="GO" id="GO:0005615">
    <property type="term" value="C:extracellular space"/>
    <property type="evidence" value="ECO:0007669"/>
    <property type="project" value="UniProtKB-KW"/>
</dbReference>
<dbReference type="GO" id="GO:0005125">
    <property type="term" value="F:cytokine activity"/>
    <property type="evidence" value="ECO:0007669"/>
    <property type="project" value="UniProtKB-KW"/>
</dbReference>
<dbReference type="GO" id="GO:0008083">
    <property type="term" value="F:growth factor activity"/>
    <property type="evidence" value="ECO:0007669"/>
    <property type="project" value="UniProtKB-KW"/>
</dbReference>
<dbReference type="GO" id="GO:0005134">
    <property type="term" value="F:interleukin-2 receptor binding"/>
    <property type="evidence" value="ECO:0007669"/>
    <property type="project" value="Ensembl"/>
</dbReference>
<dbReference type="GO" id="GO:0050798">
    <property type="term" value="P:activated T cell proliferation"/>
    <property type="evidence" value="ECO:0007669"/>
    <property type="project" value="Ensembl"/>
</dbReference>
<dbReference type="GO" id="GO:0002250">
    <property type="term" value="P:adaptive immune response"/>
    <property type="evidence" value="ECO:0007669"/>
    <property type="project" value="UniProtKB-KW"/>
</dbReference>
<dbReference type="GO" id="GO:0097696">
    <property type="term" value="P:cell surface receptor signaling pathway via STAT"/>
    <property type="evidence" value="ECO:0007669"/>
    <property type="project" value="Ensembl"/>
</dbReference>
<dbReference type="GO" id="GO:0097192">
    <property type="term" value="P:extrinsic apoptotic signaling pathway in absence of ligand"/>
    <property type="evidence" value="ECO:0007669"/>
    <property type="project" value="Ensembl"/>
</dbReference>
<dbReference type="GO" id="GO:0038110">
    <property type="term" value="P:interleukin-2-mediated signaling pathway"/>
    <property type="evidence" value="ECO:0007669"/>
    <property type="project" value="Ensembl"/>
</dbReference>
<dbReference type="GO" id="GO:0002366">
    <property type="term" value="P:leukocyte activation involved in immune response"/>
    <property type="evidence" value="ECO:0007669"/>
    <property type="project" value="Ensembl"/>
</dbReference>
<dbReference type="GO" id="GO:0002903">
    <property type="term" value="P:negative regulation of B cell apoptotic process"/>
    <property type="evidence" value="ECO:0007669"/>
    <property type="project" value="Ensembl"/>
</dbReference>
<dbReference type="GO" id="GO:0050728">
    <property type="term" value="P:negative regulation of inflammatory response"/>
    <property type="evidence" value="ECO:0007669"/>
    <property type="project" value="Ensembl"/>
</dbReference>
<dbReference type="GO" id="GO:0050672">
    <property type="term" value="P:negative regulation of lymphocyte proliferation"/>
    <property type="evidence" value="ECO:0007669"/>
    <property type="project" value="Ensembl"/>
</dbReference>
<dbReference type="GO" id="GO:2000320">
    <property type="term" value="P:negative regulation of T-helper 17 cell differentiation"/>
    <property type="evidence" value="ECO:0007669"/>
    <property type="project" value="Ensembl"/>
</dbReference>
<dbReference type="GO" id="GO:0042104">
    <property type="term" value="P:positive regulation of activated T cell proliferation"/>
    <property type="evidence" value="ECO:0007669"/>
    <property type="project" value="Ensembl"/>
</dbReference>
<dbReference type="GO" id="GO:0030890">
    <property type="term" value="P:positive regulation of B cell proliferation"/>
    <property type="evidence" value="ECO:0007669"/>
    <property type="project" value="Ensembl"/>
</dbReference>
<dbReference type="GO" id="GO:0032740">
    <property type="term" value="P:positive regulation of interleukin-17 production"/>
    <property type="evidence" value="ECO:0007669"/>
    <property type="project" value="Ensembl"/>
</dbReference>
<dbReference type="GO" id="GO:0048304">
    <property type="term" value="P:positive regulation of isotype switching to IgG isotypes"/>
    <property type="evidence" value="ECO:0007669"/>
    <property type="project" value="Ensembl"/>
</dbReference>
<dbReference type="GO" id="GO:1900100">
    <property type="term" value="P:positive regulation of plasma cell differentiation"/>
    <property type="evidence" value="ECO:0007669"/>
    <property type="project" value="Ensembl"/>
</dbReference>
<dbReference type="GO" id="GO:0045944">
    <property type="term" value="P:positive regulation of transcription by RNA polymerase II"/>
    <property type="evidence" value="ECO:0007669"/>
    <property type="project" value="Ensembl"/>
</dbReference>
<dbReference type="GO" id="GO:0032729">
    <property type="term" value="P:positive regulation of type II interferon production"/>
    <property type="evidence" value="ECO:0007669"/>
    <property type="project" value="Ensembl"/>
</dbReference>
<dbReference type="GO" id="GO:2000561">
    <property type="term" value="P:regulation of CD4-positive, alpha-beta T cell proliferation"/>
    <property type="evidence" value="ECO:0007669"/>
    <property type="project" value="Ensembl"/>
</dbReference>
<dbReference type="GO" id="GO:0046013">
    <property type="term" value="P:regulation of T cell homeostatic proliferation"/>
    <property type="evidence" value="ECO:0007669"/>
    <property type="project" value="Ensembl"/>
</dbReference>
<dbReference type="GO" id="GO:0006366">
    <property type="term" value="P:transcription by RNA polymerase II"/>
    <property type="evidence" value="ECO:0007669"/>
    <property type="project" value="Ensembl"/>
</dbReference>
<dbReference type="Gene3D" id="1.20.1250.10">
    <property type="match status" value="1"/>
</dbReference>
<dbReference type="InterPro" id="IPR009079">
    <property type="entry name" value="4_helix_cytokine-like_core"/>
</dbReference>
<dbReference type="InterPro" id="IPR000779">
    <property type="entry name" value="IL-2"/>
</dbReference>
<dbReference type="InterPro" id="IPR030477">
    <property type="entry name" value="IL-2_CS"/>
</dbReference>
<dbReference type="PANTHER" id="PTHR48487">
    <property type="entry name" value="INTERLEUKIN-2"/>
    <property type="match status" value="1"/>
</dbReference>
<dbReference type="PANTHER" id="PTHR48487:SF1">
    <property type="entry name" value="INTERLEUKIN-2"/>
    <property type="match status" value="1"/>
</dbReference>
<dbReference type="Pfam" id="PF00715">
    <property type="entry name" value="IL2"/>
    <property type="match status" value="1"/>
</dbReference>
<dbReference type="PRINTS" id="PR00265">
    <property type="entry name" value="INTERLEUKIN2"/>
</dbReference>
<dbReference type="SMART" id="SM00189">
    <property type="entry name" value="IL2"/>
    <property type="match status" value="1"/>
</dbReference>
<dbReference type="SUPFAM" id="SSF47266">
    <property type="entry name" value="4-helical cytokines"/>
    <property type="match status" value="1"/>
</dbReference>
<dbReference type="PROSITE" id="PS00424">
    <property type="entry name" value="INTERLEUKIN_2"/>
    <property type="match status" value="1"/>
</dbReference>
<sequence length="153" mass="17256">MYKVQLLSCIALTLALLTSSAPTSSSTKETQEQLDQLLLDLQVLLKGVNDYKNSKLSRMLTFKFYMPKKVTELKHLQCLEEELKPLEEVLNLAQGKNSHGGNTRESISNINVTVLKLKGSETFMCEYDETVTIVEFLNRWITFCQSIISASSS</sequence>
<evidence type="ECO:0000250" key="1"/>
<evidence type="ECO:0000250" key="2">
    <source>
        <dbReference type="UniProtKB" id="P60568"/>
    </source>
</evidence>
<evidence type="ECO:0000255" key="3"/>
<evidence type="ECO:0000305" key="4"/>
<comment type="function">
    <text evidence="2">Cytokine produced by activated CD4-positive helper T-cells and to a lesser extend activated CD8-positive T-cells and natural killer (NK) cells that plays pivotal roles in the immune response and tolerance. Binds to a receptor complex composed of either the high-affinity trimeric IL-2R (IL2RA/CD25, IL2RB/CD122 and IL2RG/CD132) or the low-affinity dimeric IL-2R (IL2RB and IL2RG). Interaction with the receptor leads to oligomerization and conformation changes in the IL-2R subunits resulting in downstream signaling starting with phosphorylation of JAK1 and JAK3. In turn, JAK1 and JAK3 phosphorylate the receptor to form a docking site leading to the phosphorylation of several substrates including STAT5. This process leads to activation of several pathways including STAT, phosphoinositide-3-kinase/PI3K and mitogen-activated protein kinase/MAPK pathways. Functions as a T-cell growth factor and can increase NK-cell cytolytic activity as well. Promotes strong proliferation of activated B-cells and subsequently immunoglobulin production. Plays a pivotal role in regulating the adaptive immune system by controlling the survival and proliferation of regulatory T-cells, which are required for the maintenance of immune tolerance. Moreover, participates in the differentiation and homeostasis of effector T-cell subsets, including Th1, Th2, Th17 as well as memory CD8-positive T-cells.</text>
</comment>
<comment type="subcellular location">
    <subcellularLocation>
        <location>Secreted</location>
    </subcellularLocation>
</comment>
<comment type="similarity">
    <text evidence="4">Belongs to the IL-2 family.</text>
</comment>
<proteinExistence type="evidence at transcript level"/>
<name>IL2_RABIT</name>
<feature type="signal peptide" evidence="1">
    <location>
        <begin position="1"/>
        <end position="20"/>
    </location>
</feature>
<feature type="chain" id="PRO_0000015499" description="Interleukin-2">
    <location>
        <begin position="21"/>
        <end position="153"/>
    </location>
</feature>
<feature type="glycosylation site" description="O-linked (GalNAc...) threonine" evidence="1">
    <location>
        <position position="23"/>
    </location>
</feature>
<feature type="glycosylation site" description="N-linked (GlcNAc...) asparagine" evidence="3">
    <location>
        <position position="111"/>
    </location>
</feature>
<feature type="disulfide bond" evidence="1">
    <location>
        <begin position="78"/>
        <end position="125"/>
    </location>
</feature>
<gene>
    <name type="primary">IL2</name>
</gene>
<organism>
    <name type="scientific">Oryctolagus cuniculus</name>
    <name type="common">Rabbit</name>
    <dbReference type="NCBI Taxonomy" id="9986"/>
    <lineage>
        <taxon>Eukaryota</taxon>
        <taxon>Metazoa</taxon>
        <taxon>Chordata</taxon>
        <taxon>Craniata</taxon>
        <taxon>Vertebrata</taxon>
        <taxon>Euteleostomi</taxon>
        <taxon>Mammalia</taxon>
        <taxon>Eutheria</taxon>
        <taxon>Euarchontoglires</taxon>
        <taxon>Glires</taxon>
        <taxon>Lagomorpha</taxon>
        <taxon>Leporidae</taxon>
        <taxon>Oryctolagus</taxon>
    </lineage>
</organism>
<accession>O77620</accession>
<accession>Q0MS71</accession>
<reference key="1">
    <citation type="journal article" date="2000" name="Cytokine">
        <title>The complete cDNA sequences of IL-2, IL-4, IL-6 and IL-10 from the European rabbit (Oryctolagus cuniculus).</title>
        <authorList>
            <person name="Perkins H.D."/>
            <person name="van Leeuwen B.H."/>
            <person name="Hardy C.M."/>
            <person name="Kerr P.J."/>
        </authorList>
    </citation>
    <scope>NUCLEOTIDE SEQUENCE [MRNA]</scope>
    <source>
        <tissue>Lymph node</tissue>
    </source>
</reference>
<reference key="2">
    <citation type="submission" date="2006-07" db="EMBL/GenBank/DDBJ databases">
        <title>Cloning and sequence analysis of IL-2 gene in rabbit.</title>
        <authorList>
            <person name="Huang D."/>
            <person name="Yang G."/>
            <person name="Gu X."/>
            <person name="Wu K."/>
            <person name="Hao G."/>
        </authorList>
    </citation>
    <scope>NUCLEOTIDE SEQUENCE [MRNA]</scope>
</reference>
<keyword id="KW-1064">Adaptive immunity</keyword>
<keyword id="KW-0202">Cytokine</keyword>
<keyword id="KW-1015">Disulfide bond</keyword>
<keyword id="KW-0325">Glycoprotein</keyword>
<keyword id="KW-0339">Growth factor</keyword>
<keyword id="KW-0391">Immunity</keyword>
<keyword id="KW-1185">Reference proteome</keyword>
<keyword id="KW-0964">Secreted</keyword>
<keyword id="KW-0732">Signal</keyword>
<protein>
    <recommendedName>
        <fullName>Interleukin-2</fullName>
        <shortName>IL-2</shortName>
    </recommendedName>
    <alternativeName>
        <fullName>T-cell growth factor</fullName>
        <shortName>TCGF</shortName>
    </alternativeName>
</protein>